<name>RPOZ_PARMW</name>
<evidence type="ECO:0000255" key="1">
    <source>
        <dbReference type="HAMAP-Rule" id="MF_00366"/>
    </source>
</evidence>
<feature type="chain" id="PRO_0000129000" description="DNA-directed RNA polymerase subunit omega">
    <location>
        <begin position="1"/>
        <end position="75"/>
    </location>
</feature>
<keyword id="KW-0240">DNA-directed RNA polymerase</keyword>
<keyword id="KW-0548">Nucleotidyltransferase</keyword>
<keyword id="KW-0804">Transcription</keyword>
<keyword id="KW-0808">Transferase</keyword>
<proteinExistence type="inferred from homology"/>
<reference key="1">
    <citation type="journal article" date="2003" name="Nature">
        <title>The genome of a motile marine Synechococcus.</title>
        <authorList>
            <person name="Palenik B."/>
            <person name="Brahamsha B."/>
            <person name="Larimer F.W."/>
            <person name="Land M.L."/>
            <person name="Hauser L."/>
            <person name="Chain P."/>
            <person name="Lamerdin J.E."/>
            <person name="Regala W."/>
            <person name="Allen E.E."/>
            <person name="McCarren J."/>
            <person name="Paulsen I.T."/>
            <person name="Dufresne A."/>
            <person name="Partensky F."/>
            <person name="Webb E.A."/>
            <person name="Waterbury J."/>
        </authorList>
    </citation>
    <scope>NUCLEOTIDE SEQUENCE [LARGE SCALE GENOMIC DNA]</scope>
    <source>
        <strain>WH8102</strain>
    </source>
</reference>
<sequence length="75" mass="8423">MISAGVDSSDLAKRGESLIRQSSNRYLTTVRIAFRAKQRRFDDFDGLLEESSVKPVQRAIVELSDEQDQPDLLPG</sequence>
<protein>
    <recommendedName>
        <fullName evidence="1">DNA-directed RNA polymerase subunit omega</fullName>
        <shortName evidence="1">RNAP omega subunit</shortName>
        <ecNumber evidence="1">2.7.7.6</ecNumber>
    </recommendedName>
    <alternativeName>
        <fullName evidence="1">RNA polymerase omega subunit</fullName>
    </alternativeName>
    <alternativeName>
        <fullName evidence="1">Transcriptase subunit omega</fullName>
    </alternativeName>
</protein>
<comment type="function">
    <text evidence="1">Promotes RNA polymerase assembly. Latches the N- and C-terminal regions of the beta' subunit thereby facilitating its interaction with the beta and alpha subunits.</text>
</comment>
<comment type="catalytic activity">
    <reaction evidence="1">
        <text>RNA(n) + a ribonucleoside 5'-triphosphate = RNA(n+1) + diphosphate</text>
        <dbReference type="Rhea" id="RHEA:21248"/>
        <dbReference type="Rhea" id="RHEA-COMP:14527"/>
        <dbReference type="Rhea" id="RHEA-COMP:17342"/>
        <dbReference type="ChEBI" id="CHEBI:33019"/>
        <dbReference type="ChEBI" id="CHEBI:61557"/>
        <dbReference type="ChEBI" id="CHEBI:140395"/>
        <dbReference type="EC" id="2.7.7.6"/>
    </reaction>
</comment>
<comment type="subunit">
    <text evidence="1">In cyanobacteria the RNAP catalytic core is composed of 2 alpha, 1 beta, 1 beta', 1 gamma and 1 omega subunit. When a sigma factor is associated with the core the holoenzyme is formed, which can initiate transcription.</text>
</comment>
<comment type="similarity">
    <text evidence="1">Belongs to the RNA polymerase subunit omega family.</text>
</comment>
<accession>Q7U8T6</accession>
<dbReference type="EC" id="2.7.7.6" evidence="1"/>
<dbReference type="EMBL" id="BX569690">
    <property type="protein sequence ID" value="CAE07040.1"/>
    <property type="molecule type" value="Genomic_DNA"/>
</dbReference>
<dbReference type="RefSeq" id="WP_009790464.1">
    <property type="nucleotide sequence ID" value="NC_005070.1"/>
</dbReference>
<dbReference type="SMR" id="Q7U8T6"/>
<dbReference type="STRING" id="84588.SYNW0525"/>
<dbReference type="KEGG" id="syw:SYNW0525"/>
<dbReference type="eggNOG" id="ENOG5032RMS">
    <property type="taxonomic scope" value="Bacteria"/>
</dbReference>
<dbReference type="HOGENOM" id="CLU_175526_0_0_3"/>
<dbReference type="Proteomes" id="UP000001422">
    <property type="component" value="Chromosome"/>
</dbReference>
<dbReference type="GO" id="GO:0000428">
    <property type="term" value="C:DNA-directed RNA polymerase complex"/>
    <property type="evidence" value="ECO:0007669"/>
    <property type="project" value="UniProtKB-KW"/>
</dbReference>
<dbReference type="GO" id="GO:0003677">
    <property type="term" value="F:DNA binding"/>
    <property type="evidence" value="ECO:0007669"/>
    <property type="project" value="UniProtKB-UniRule"/>
</dbReference>
<dbReference type="GO" id="GO:0003899">
    <property type="term" value="F:DNA-directed RNA polymerase activity"/>
    <property type="evidence" value="ECO:0007669"/>
    <property type="project" value="UniProtKB-UniRule"/>
</dbReference>
<dbReference type="GO" id="GO:0006351">
    <property type="term" value="P:DNA-templated transcription"/>
    <property type="evidence" value="ECO:0007669"/>
    <property type="project" value="UniProtKB-UniRule"/>
</dbReference>
<dbReference type="HAMAP" id="MF_00366">
    <property type="entry name" value="RNApol_bact_RpoZ"/>
    <property type="match status" value="1"/>
</dbReference>
<dbReference type="InterPro" id="IPR003716">
    <property type="entry name" value="DNA-dir_RNA_pol_omega"/>
</dbReference>
<dbReference type="InterPro" id="IPR006110">
    <property type="entry name" value="Pol_omega/Rpo6/RPB6"/>
</dbReference>
<dbReference type="NCBIfam" id="NF001574">
    <property type="entry name" value="PRK00392.2-5"/>
    <property type="match status" value="1"/>
</dbReference>
<dbReference type="Pfam" id="PF01192">
    <property type="entry name" value="RNA_pol_Rpb6"/>
    <property type="match status" value="1"/>
</dbReference>
<organism>
    <name type="scientific">Parasynechococcus marenigrum (strain WH8102)</name>
    <dbReference type="NCBI Taxonomy" id="84588"/>
    <lineage>
        <taxon>Bacteria</taxon>
        <taxon>Bacillati</taxon>
        <taxon>Cyanobacteriota</taxon>
        <taxon>Cyanophyceae</taxon>
        <taxon>Synechococcales</taxon>
        <taxon>Prochlorococcaceae</taxon>
        <taxon>Parasynechococcus</taxon>
        <taxon>Parasynechococcus marenigrum</taxon>
    </lineage>
</organism>
<gene>
    <name evidence="1" type="primary">rpoZ</name>
    <name type="ordered locus">SYNW0525</name>
</gene>